<feature type="chain" id="PRO_0000426005" description="Probable DNA helicase MCM9">
    <location>
        <begin position="1"/>
        <end position="674"/>
    </location>
</feature>
<feature type="domain" description="MCM">
    <location>
        <begin position="318"/>
        <end position="521"/>
    </location>
</feature>
<feature type="zinc finger region" description="C4-type" evidence="2">
    <location>
        <begin position="165"/>
        <end position="198"/>
    </location>
</feature>
<feature type="short sequence motif" description="Arginine finger">
    <location>
        <begin position="497"/>
        <end position="500"/>
    </location>
</feature>
<feature type="binding site" evidence="1">
    <location>
        <begin position="368"/>
        <end position="375"/>
    </location>
    <ligand>
        <name>ATP</name>
        <dbReference type="ChEBI" id="CHEBI:30616"/>
    </ligand>
</feature>
<accession>Q69QA6</accession>
<accession>A0A0P0WUD0</accession>
<protein>
    <recommendedName>
        <fullName>Probable DNA helicase MCM9</fullName>
        <ecNumber>3.6.4.12</ecNumber>
    </recommendedName>
    <alternativeName>
        <fullName>Minichromosome maintenance 9</fullName>
        <shortName>OsMCM9</shortName>
    </alternativeName>
</protein>
<evidence type="ECO:0000250" key="1"/>
<evidence type="ECO:0000255" key="2"/>
<evidence type="ECO:0000305" key="3"/>
<name>MCM9_ORYSJ</name>
<gene>
    <name type="primary">MCM9</name>
    <name type="ordered locus">Os06g0218500</name>
    <name type="ordered locus">LOC_Os06g11500</name>
    <name type="ORF">P0436F11.6</name>
    <name type="ORF">P0644A02.30</name>
</gene>
<organism>
    <name type="scientific">Oryza sativa subsp. japonica</name>
    <name type="common">Rice</name>
    <dbReference type="NCBI Taxonomy" id="39947"/>
    <lineage>
        <taxon>Eukaryota</taxon>
        <taxon>Viridiplantae</taxon>
        <taxon>Streptophyta</taxon>
        <taxon>Embryophyta</taxon>
        <taxon>Tracheophyta</taxon>
        <taxon>Spermatophyta</taxon>
        <taxon>Magnoliopsida</taxon>
        <taxon>Liliopsida</taxon>
        <taxon>Poales</taxon>
        <taxon>Poaceae</taxon>
        <taxon>BOP clade</taxon>
        <taxon>Oryzoideae</taxon>
        <taxon>Oryzeae</taxon>
        <taxon>Oryzinae</taxon>
        <taxon>Oryza</taxon>
        <taxon>Oryza sativa</taxon>
    </lineage>
</organism>
<comment type="function">
    <text evidence="1">Probable DNA helicase that may play a role in DNA repair during meiosis.</text>
</comment>
<comment type="catalytic activity">
    <reaction>
        <text>ATP + H2O = ADP + phosphate + H(+)</text>
        <dbReference type="Rhea" id="RHEA:13065"/>
        <dbReference type="ChEBI" id="CHEBI:15377"/>
        <dbReference type="ChEBI" id="CHEBI:15378"/>
        <dbReference type="ChEBI" id="CHEBI:30616"/>
        <dbReference type="ChEBI" id="CHEBI:43474"/>
        <dbReference type="ChEBI" id="CHEBI:456216"/>
        <dbReference type="EC" id="3.6.4.12"/>
    </reaction>
</comment>
<comment type="subcellular location">
    <subcellularLocation>
        <location evidence="3">Nucleus</location>
    </subcellularLocation>
</comment>
<comment type="similarity">
    <text evidence="3">Belongs to the MCM family.</text>
</comment>
<proteinExistence type="evidence at transcript level"/>
<keyword id="KW-0067">ATP-binding</keyword>
<keyword id="KW-0227">DNA damage</keyword>
<keyword id="KW-0234">DNA repair</keyword>
<keyword id="KW-0238">DNA-binding</keyword>
<keyword id="KW-0347">Helicase</keyword>
<keyword id="KW-0378">Hydrolase</keyword>
<keyword id="KW-0469">Meiosis</keyword>
<keyword id="KW-0479">Metal-binding</keyword>
<keyword id="KW-0547">Nucleotide-binding</keyword>
<keyword id="KW-0539">Nucleus</keyword>
<keyword id="KW-1185">Reference proteome</keyword>
<keyword id="KW-0862">Zinc</keyword>
<keyword id="KW-0863">Zinc-finger</keyword>
<sequence>MPPPAEEFAVDDLDEFESRLDSFLNRFHADDLRRILLPFPDGKLHFPLVIDFAELLEFDPEVAHQLYDYPKDVLELFDAAAQRALDKFDAAARRADKRKAGDETMEKKFVHVRVNTSGSALECPEASPSIGKVRVKHRGTLLTLKGTVIRSGGVKMIEGERKYQCRKCKCRFTVHPELEAGNRITLPASCKSKSAKGCGGANFQLIEDSITCHDYQEIKIQENIQLLGVGSIPRSMPIILMDDLVDIVKAGDDVVVTGRLSAKWSPDIKDVRSNLDPMLIANFVRRTNELKSDLDIPVEIINKFEEFWAASRATPLKGRNSILKGICPQIYGLFTVKLAVALTLIGGVQHVDASGTKVRGEPHMLLVGDPGTGKSQFLKFAAKLSNRSVITTGLGSTSAGLTVTAVKDGGEWMLEAGALVLADGGLCCIDEFDSMREHDRTTIHEAMEQQTISIAKAGLVTTLNTRTTVFGATNPKGQYDPNESLSVNTTLSGPLLSRFDIVLVLLDTKNKKWDKIVSSHILAENTEEKKGKTSDPEVMWTLSMLRRYIHYVKQHFKPVLTKEAERVISSYYQRQRQSGTRNAARTTVRMLESLIRLAQAHARLMFRNDVTKLDAIAAILCIESSMTTSAIVDTAGNALHSNFTENPDQECILKCDSIAYLSKNIKYLTDEISN</sequence>
<reference key="1">
    <citation type="journal article" date="2005" name="Nature">
        <title>The map-based sequence of the rice genome.</title>
        <authorList>
            <consortium name="International rice genome sequencing project (IRGSP)"/>
        </authorList>
    </citation>
    <scope>NUCLEOTIDE SEQUENCE [LARGE SCALE GENOMIC DNA]</scope>
    <source>
        <strain>cv. Nipponbare</strain>
    </source>
</reference>
<reference key="2">
    <citation type="journal article" date="2008" name="Nucleic Acids Res.">
        <title>The rice annotation project database (RAP-DB): 2008 update.</title>
        <authorList>
            <consortium name="The rice annotation project (RAP)"/>
        </authorList>
    </citation>
    <scope>GENOME REANNOTATION</scope>
    <source>
        <strain>cv. Nipponbare</strain>
    </source>
</reference>
<reference key="3">
    <citation type="journal article" date="2013" name="Rice">
        <title>Improvement of the Oryza sativa Nipponbare reference genome using next generation sequence and optical map data.</title>
        <authorList>
            <person name="Kawahara Y."/>
            <person name="de la Bastide M."/>
            <person name="Hamilton J.P."/>
            <person name="Kanamori H."/>
            <person name="McCombie W.R."/>
            <person name="Ouyang S."/>
            <person name="Schwartz D.C."/>
            <person name="Tanaka T."/>
            <person name="Wu J."/>
            <person name="Zhou S."/>
            <person name="Childs K.L."/>
            <person name="Davidson R.M."/>
            <person name="Lin H."/>
            <person name="Quesada-Ocampo L."/>
            <person name="Vaillancourt B."/>
            <person name="Sakai H."/>
            <person name="Lee S.S."/>
            <person name="Kim J."/>
            <person name="Numa H."/>
            <person name="Itoh T."/>
            <person name="Buell C.R."/>
            <person name="Matsumoto T."/>
        </authorList>
    </citation>
    <scope>GENOME REANNOTATION</scope>
    <source>
        <strain>cv. Nipponbare</strain>
    </source>
</reference>
<reference key="4">
    <citation type="journal article" date="2003" name="Science">
        <title>Collection, mapping, and annotation of over 28,000 cDNA clones from japonica rice.</title>
        <authorList>
            <consortium name="The rice full-length cDNA consortium"/>
        </authorList>
    </citation>
    <scope>NUCLEOTIDE SEQUENCE [LARGE SCALE MRNA]</scope>
    <source>
        <strain>cv. Nipponbare</strain>
    </source>
</reference>
<reference key="5">
    <citation type="journal article" date="2007" name="Plant Physiol.">
        <title>Genome-wide analysis of the core DNA replication machinery in the higher plants Arabidopsis and rice.</title>
        <authorList>
            <person name="Shultz R.W."/>
            <person name="Tatineni V.M."/>
            <person name="Hanley-Bowdoin L."/>
            <person name="Thompson W.F."/>
        </authorList>
    </citation>
    <scope>GENE FAMILY</scope>
</reference>
<dbReference type="EC" id="3.6.4.12"/>
<dbReference type="EMBL" id="AP003488">
    <property type="protein sequence ID" value="BAD37231.1"/>
    <property type="molecule type" value="Genomic_DNA"/>
</dbReference>
<dbReference type="EMBL" id="AP005425">
    <property type="protein sequence ID" value="BAD36103.1"/>
    <property type="molecule type" value="Genomic_DNA"/>
</dbReference>
<dbReference type="EMBL" id="AP008212">
    <property type="protein sequence ID" value="BAF19072.1"/>
    <property type="molecule type" value="Genomic_DNA"/>
</dbReference>
<dbReference type="EMBL" id="AP014962">
    <property type="protein sequence ID" value="BAS96811.1"/>
    <property type="molecule type" value="Genomic_DNA"/>
</dbReference>
<dbReference type="EMBL" id="AK100667">
    <property type="protein sequence ID" value="BAG94707.1"/>
    <property type="molecule type" value="mRNA"/>
</dbReference>
<dbReference type="RefSeq" id="XP_015643699.1">
    <property type="nucleotide sequence ID" value="XM_015788213.1"/>
</dbReference>
<dbReference type="RefSeq" id="XP_015643700.1">
    <property type="nucleotide sequence ID" value="XM_015788214.1"/>
</dbReference>
<dbReference type="RefSeq" id="XP_015643701.1">
    <property type="nucleotide sequence ID" value="XM_015788215.1"/>
</dbReference>
<dbReference type="SMR" id="Q69QA6"/>
<dbReference type="FunCoup" id="Q69QA6">
    <property type="interactions" value="1328"/>
</dbReference>
<dbReference type="STRING" id="39947.Q69QA6"/>
<dbReference type="PaxDb" id="39947-Q69QA6"/>
<dbReference type="EnsemblPlants" id="Os06t0218500-01">
    <property type="protein sequence ID" value="Os06t0218500-01"/>
    <property type="gene ID" value="Os06g0218500"/>
</dbReference>
<dbReference type="EnsemblPlants" id="Os06t0218500-02">
    <property type="protein sequence ID" value="Os06t0218500-02"/>
    <property type="gene ID" value="Os06g0218500"/>
</dbReference>
<dbReference type="GeneID" id="4340503"/>
<dbReference type="Gramene" id="Os06t0218500-01">
    <property type="protein sequence ID" value="Os06t0218500-01"/>
    <property type="gene ID" value="Os06g0218500"/>
</dbReference>
<dbReference type="Gramene" id="Os06t0218500-02">
    <property type="protein sequence ID" value="Os06t0218500-02"/>
    <property type="gene ID" value="Os06g0218500"/>
</dbReference>
<dbReference type="KEGG" id="dosa:Os06g0218500"/>
<dbReference type="KEGG" id="osa:4340503"/>
<dbReference type="eggNOG" id="KOG0477">
    <property type="taxonomic scope" value="Eukaryota"/>
</dbReference>
<dbReference type="HOGENOM" id="CLU_000995_7_2_1"/>
<dbReference type="InParanoid" id="Q69QA6"/>
<dbReference type="OMA" id="HYVKQHF"/>
<dbReference type="OrthoDB" id="271325at2759"/>
<dbReference type="Proteomes" id="UP000000763">
    <property type="component" value="Chromosome 6"/>
</dbReference>
<dbReference type="Proteomes" id="UP000059680">
    <property type="component" value="Chromosome 6"/>
</dbReference>
<dbReference type="GO" id="GO:0042555">
    <property type="term" value="C:MCM complex"/>
    <property type="evidence" value="ECO:0000318"/>
    <property type="project" value="GO_Central"/>
</dbReference>
<dbReference type="GO" id="GO:0005634">
    <property type="term" value="C:nucleus"/>
    <property type="evidence" value="ECO:0000318"/>
    <property type="project" value="GO_Central"/>
</dbReference>
<dbReference type="GO" id="GO:0005524">
    <property type="term" value="F:ATP binding"/>
    <property type="evidence" value="ECO:0007669"/>
    <property type="project" value="UniProtKB-KW"/>
</dbReference>
<dbReference type="GO" id="GO:0016887">
    <property type="term" value="F:ATP hydrolysis activity"/>
    <property type="evidence" value="ECO:0007669"/>
    <property type="project" value="InterPro"/>
</dbReference>
<dbReference type="GO" id="GO:0004386">
    <property type="term" value="F:helicase activity"/>
    <property type="evidence" value="ECO:0007669"/>
    <property type="project" value="UniProtKB-KW"/>
</dbReference>
<dbReference type="GO" id="GO:0003697">
    <property type="term" value="F:single-stranded DNA binding"/>
    <property type="evidence" value="ECO:0000318"/>
    <property type="project" value="GO_Central"/>
</dbReference>
<dbReference type="GO" id="GO:0008270">
    <property type="term" value="F:zinc ion binding"/>
    <property type="evidence" value="ECO:0007669"/>
    <property type="project" value="UniProtKB-KW"/>
</dbReference>
<dbReference type="GO" id="GO:0000724">
    <property type="term" value="P:double-strand break repair via homologous recombination"/>
    <property type="evidence" value="ECO:0000318"/>
    <property type="project" value="GO_Central"/>
</dbReference>
<dbReference type="GO" id="GO:0051321">
    <property type="term" value="P:meiotic cell cycle"/>
    <property type="evidence" value="ECO:0007669"/>
    <property type="project" value="UniProtKB-KW"/>
</dbReference>
<dbReference type="CDD" id="cd17760">
    <property type="entry name" value="MCM9"/>
    <property type="match status" value="1"/>
</dbReference>
<dbReference type="FunFam" id="3.30.1640.10:FF:000051">
    <property type="entry name" value="DNA helicase"/>
    <property type="match status" value="1"/>
</dbReference>
<dbReference type="FunFam" id="3.40.50.300:FF:002270">
    <property type="entry name" value="Probable DNA helicase MCM9"/>
    <property type="match status" value="1"/>
</dbReference>
<dbReference type="Gene3D" id="2.20.28.10">
    <property type="match status" value="1"/>
</dbReference>
<dbReference type="Gene3D" id="3.30.1640.10">
    <property type="entry name" value="mini-chromosome maintenance (MCM) complex, chain A, domain 1"/>
    <property type="match status" value="1"/>
</dbReference>
<dbReference type="Gene3D" id="2.40.50.140">
    <property type="entry name" value="Nucleic acid-binding proteins"/>
    <property type="match status" value="1"/>
</dbReference>
<dbReference type="Gene3D" id="3.40.50.300">
    <property type="entry name" value="P-loop containing nucleotide triphosphate hydrolases"/>
    <property type="match status" value="1"/>
</dbReference>
<dbReference type="InterPro" id="IPR003593">
    <property type="entry name" value="AAA+_ATPase"/>
</dbReference>
<dbReference type="InterPro" id="IPR031327">
    <property type="entry name" value="MCM"/>
</dbReference>
<dbReference type="InterPro" id="IPR001208">
    <property type="entry name" value="MCM_dom"/>
</dbReference>
<dbReference type="InterPro" id="IPR041562">
    <property type="entry name" value="MCM_lid"/>
</dbReference>
<dbReference type="InterPro" id="IPR027925">
    <property type="entry name" value="MCM_N"/>
</dbReference>
<dbReference type="InterPro" id="IPR033762">
    <property type="entry name" value="MCM_OB"/>
</dbReference>
<dbReference type="InterPro" id="IPR012340">
    <property type="entry name" value="NA-bd_OB-fold"/>
</dbReference>
<dbReference type="InterPro" id="IPR027417">
    <property type="entry name" value="P-loop_NTPase"/>
</dbReference>
<dbReference type="PANTHER" id="PTHR11630:SF48">
    <property type="entry name" value="DNA HELICASE MCM9"/>
    <property type="match status" value="1"/>
</dbReference>
<dbReference type="PANTHER" id="PTHR11630">
    <property type="entry name" value="DNA REPLICATION LICENSING FACTOR MCM FAMILY MEMBER"/>
    <property type="match status" value="1"/>
</dbReference>
<dbReference type="Pfam" id="PF00493">
    <property type="entry name" value="MCM"/>
    <property type="match status" value="1"/>
</dbReference>
<dbReference type="Pfam" id="PF17855">
    <property type="entry name" value="MCM_lid"/>
    <property type="match status" value="1"/>
</dbReference>
<dbReference type="Pfam" id="PF14551">
    <property type="entry name" value="MCM_N"/>
    <property type="match status" value="1"/>
</dbReference>
<dbReference type="Pfam" id="PF17207">
    <property type="entry name" value="MCM_OB"/>
    <property type="match status" value="1"/>
</dbReference>
<dbReference type="PRINTS" id="PR01657">
    <property type="entry name" value="MCMFAMILY"/>
</dbReference>
<dbReference type="SMART" id="SM00382">
    <property type="entry name" value="AAA"/>
    <property type="match status" value="1"/>
</dbReference>
<dbReference type="SMART" id="SM00350">
    <property type="entry name" value="MCM"/>
    <property type="match status" value="1"/>
</dbReference>
<dbReference type="SUPFAM" id="SSF50249">
    <property type="entry name" value="Nucleic acid-binding proteins"/>
    <property type="match status" value="1"/>
</dbReference>
<dbReference type="SUPFAM" id="SSF52540">
    <property type="entry name" value="P-loop containing nucleoside triphosphate hydrolases"/>
    <property type="match status" value="1"/>
</dbReference>
<dbReference type="PROSITE" id="PS50051">
    <property type="entry name" value="MCM_2"/>
    <property type="match status" value="1"/>
</dbReference>